<protein>
    <recommendedName>
        <fullName evidence="1">ATP synthase subunit delta</fullName>
    </recommendedName>
    <alternativeName>
        <fullName evidence="1">ATP synthase F(1) sector subunit delta</fullName>
    </alternativeName>
    <alternativeName>
        <fullName evidence="1">F-type ATPase subunit delta</fullName>
        <shortName evidence="1">F-ATPase subunit delta</shortName>
    </alternativeName>
</protein>
<organism>
    <name type="scientific">Streptococcus pyogenes serotype M12 (strain MGAS2096)</name>
    <dbReference type="NCBI Taxonomy" id="370553"/>
    <lineage>
        <taxon>Bacteria</taxon>
        <taxon>Bacillati</taxon>
        <taxon>Bacillota</taxon>
        <taxon>Bacilli</taxon>
        <taxon>Lactobacillales</taxon>
        <taxon>Streptococcaceae</taxon>
        <taxon>Streptococcus</taxon>
    </lineage>
</organism>
<gene>
    <name evidence="1" type="primary">atpH</name>
    <name type="ordered locus">MGAS2096_Spy0640</name>
</gene>
<sequence>MTKKEQALIEQYAKSLVEVASEHHSLDALQADVLAILETFVTTNLDQSLSSLAVPHAEKIKLLTLLKGNNSVYMNNFLNLILQNEREAYLYQMLQAVLNEIAIVSNQYDVTVTSSLPLTEEQKSRVRAVVAKKFAVTAGRLIEKVDPSLIGGFIISVNNKVIDTSIRRQLQAFKMNLK</sequence>
<keyword id="KW-0066">ATP synthesis</keyword>
<keyword id="KW-1003">Cell membrane</keyword>
<keyword id="KW-0139">CF(1)</keyword>
<keyword id="KW-0375">Hydrogen ion transport</keyword>
<keyword id="KW-0406">Ion transport</keyword>
<keyword id="KW-0472">Membrane</keyword>
<keyword id="KW-0813">Transport</keyword>
<feature type="chain" id="PRO_0000371158" description="ATP synthase subunit delta">
    <location>
        <begin position="1"/>
        <end position="178"/>
    </location>
</feature>
<proteinExistence type="inferred from homology"/>
<dbReference type="EMBL" id="CP000261">
    <property type="protein sequence ID" value="ABF35692.1"/>
    <property type="molecule type" value="Genomic_DNA"/>
</dbReference>
<dbReference type="SMR" id="Q1JCL6"/>
<dbReference type="KEGG" id="spj:MGAS2096_Spy0640"/>
<dbReference type="HOGENOM" id="CLU_085114_1_2_9"/>
<dbReference type="GO" id="GO:0005886">
    <property type="term" value="C:plasma membrane"/>
    <property type="evidence" value="ECO:0007669"/>
    <property type="project" value="UniProtKB-SubCell"/>
</dbReference>
<dbReference type="GO" id="GO:0045259">
    <property type="term" value="C:proton-transporting ATP synthase complex"/>
    <property type="evidence" value="ECO:0007669"/>
    <property type="project" value="UniProtKB-KW"/>
</dbReference>
<dbReference type="GO" id="GO:0046933">
    <property type="term" value="F:proton-transporting ATP synthase activity, rotational mechanism"/>
    <property type="evidence" value="ECO:0007669"/>
    <property type="project" value="UniProtKB-UniRule"/>
</dbReference>
<dbReference type="Gene3D" id="1.10.520.20">
    <property type="entry name" value="N-terminal domain of the delta subunit of the F1F0-ATP synthase"/>
    <property type="match status" value="1"/>
</dbReference>
<dbReference type="HAMAP" id="MF_01416">
    <property type="entry name" value="ATP_synth_delta_bact"/>
    <property type="match status" value="1"/>
</dbReference>
<dbReference type="InterPro" id="IPR026015">
    <property type="entry name" value="ATP_synth_OSCP/delta_N_sf"/>
</dbReference>
<dbReference type="InterPro" id="IPR000711">
    <property type="entry name" value="ATPase_OSCP/dsu"/>
</dbReference>
<dbReference type="NCBIfam" id="TIGR01145">
    <property type="entry name" value="ATP_synt_delta"/>
    <property type="match status" value="1"/>
</dbReference>
<dbReference type="NCBIfam" id="NF004401">
    <property type="entry name" value="PRK05758.2-1"/>
    <property type="match status" value="1"/>
</dbReference>
<dbReference type="PANTHER" id="PTHR11910">
    <property type="entry name" value="ATP SYNTHASE DELTA CHAIN"/>
    <property type="match status" value="1"/>
</dbReference>
<dbReference type="Pfam" id="PF00213">
    <property type="entry name" value="OSCP"/>
    <property type="match status" value="1"/>
</dbReference>
<dbReference type="PRINTS" id="PR00125">
    <property type="entry name" value="ATPASEDELTA"/>
</dbReference>
<dbReference type="SUPFAM" id="SSF47928">
    <property type="entry name" value="N-terminal domain of the delta subunit of the F1F0-ATP synthase"/>
    <property type="match status" value="1"/>
</dbReference>
<accession>Q1JCL6</accession>
<comment type="function">
    <text evidence="1">F(1)F(0) ATP synthase produces ATP from ADP in the presence of a proton or sodium gradient. F-type ATPases consist of two structural domains, F(1) containing the extramembraneous catalytic core and F(0) containing the membrane proton channel, linked together by a central stalk and a peripheral stalk. During catalysis, ATP synthesis in the catalytic domain of F(1) is coupled via a rotary mechanism of the central stalk subunits to proton translocation.</text>
</comment>
<comment type="function">
    <text evidence="1">This protein is part of the stalk that links CF(0) to CF(1). It either transmits conformational changes from CF(0) to CF(1) or is implicated in proton conduction.</text>
</comment>
<comment type="subunit">
    <text evidence="1">F-type ATPases have 2 components, F(1) - the catalytic core - and F(0) - the membrane proton channel. F(1) has five subunits: alpha(3), beta(3), gamma(1), delta(1), epsilon(1). F(0) has three main subunits: a(1), b(2) and c(10-14). The alpha and beta chains form an alternating ring which encloses part of the gamma chain. F(1) is attached to F(0) by a central stalk formed by the gamma and epsilon chains, while a peripheral stalk is formed by the delta and b chains.</text>
</comment>
<comment type="subcellular location">
    <subcellularLocation>
        <location evidence="1">Cell membrane</location>
        <topology evidence="1">Peripheral membrane protein</topology>
    </subcellularLocation>
</comment>
<comment type="similarity">
    <text evidence="1">Belongs to the ATPase delta chain family.</text>
</comment>
<reference key="1">
    <citation type="journal article" date="2006" name="Proc. Natl. Acad. Sci. U.S.A.">
        <title>Molecular genetic anatomy of inter- and intraserotype variation in the human bacterial pathogen group A Streptococcus.</title>
        <authorList>
            <person name="Beres S.B."/>
            <person name="Richter E.W."/>
            <person name="Nagiec M.J."/>
            <person name="Sumby P."/>
            <person name="Porcella S.F."/>
            <person name="DeLeo F.R."/>
            <person name="Musser J.M."/>
        </authorList>
    </citation>
    <scope>NUCLEOTIDE SEQUENCE [LARGE SCALE GENOMIC DNA]</scope>
    <source>
        <strain>MGAS2096</strain>
    </source>
</reference>
<name>ATPD_STRPB</name>
<evidence type="ECO:0000255" key="1">
    <source>
        <dbReference type="HAMAP-Rule" id="MF_01416"/>
    </source>
</evidence>